<evidence type="ECO:0000255" key="1">
    <source>
        <dbReference type="HAMAP-Rule" id="MF_00146"/>
    </source>
</evidence>
<evidence type="ECO:0000256" key="2">
    <source>
        <dbReference type="SAM" id="MobiDB-lite"/>
    </source>
</evidence>
<accession>B7NQC0</accession>
<reference key="1">
    <citation type="journal article" date="2009" name="PLoS Genet.">
        <title>Organised genome dynamics in the Escherichia coli species results in highly diverse adaptive paths.</title>
        <authorList>
            <person name="Touchon M."/>
            <person name="Hoede C."/>
            <person name="Tenaillon O."/>
            <person name="Barbe V."/>
            <person name="Baeriswyl S."/>
            <person name="Bidet P."/>
            <person name="Bingen E."/>
            <person name="Bonacorsi S."/>
            <person name="Bouchier C."/>
            <person name="Bouvet O."/>
            <person name="Calteau A."/>
            <person name="Chiapello H."/>
            <person name="Clermont O."/>
            <person name="Cruveiller S."/>
            <person name="Danchin A."/>
            <person name="Diard M."/>
            <person name="Dossat C."/>
            <person name="Karoui M.E."/>
            <person name="Frapy E."/>
            <person name="Garry L."/>
            <person name="Ghigo J.M."/>
            <person name="Gilles A.M."/>
            <person name="Johnson J."/>
            <person name="Le Bouguenec C."/>
            <person name="Lescat M."/>
            <person name="Mangenot S."/>
            <person name="Martinez-Jehanne V."/>
            <person name="Matic I."/>
            <person name="Nassif X."/>
            <person name="Oztas S."/>
            <person name="Petit M.A."/>
            <person name="Pichon C."/>
            <person name="Rouy Z."/>
            <person name="Ruf C.S."/>
            <person name="Schneider D."/>
            <person name="Tourret J."/>
            <person name="Vacherie B."/>
            <person name="Vallenet D."/>
            <person name="Medigue C."/>
            <person name="Rocha E.P.C."/>
            <person name="Denamur E."/>
        </authorList>
    </citation>
    <scope>NUCLEOTIDE SEQUENCE [LARGE SCALE GENOMIC DNA]</scope>
    <source>
        <strain>IAI39 / ExPEC</strain>
    </source>
</reference>
<organism>
    <name type="scientific">Escherichia coli O7:K1 (strain IAI39 / ExPEC)</name>
    <dbReference type="NCBI Taxonomy" id="585057"/>
    <lineage>
        <taxon>Bacteria</taxon>
        <taxon>Pseudomonadati</taxon>
        <taxon>Pseudomonadota</taxon>
        <taxon>Gammaproteobacteria</taxon>
        <taxon>Enterobacterales</taxon>
        <taxon>Enterobacteriaceae</taxon>
        <taxon>Escherichia</taxon>
    </lineage>
</organism>
<protein>
    <recommendedName>
        <fullName evidence="1">dCTP deaminase</fullName>
        <ecNumber evidence="1">3.5.4.13</ecNumber>
    </recommendedName>
    <alternativeName>
        <fullName evidence="1">Deoxycytidine triphosphate deaminase</fullName>
    </alternativeName>
</protein>
<proteinExistence type="inferred from homology"/>
<comment type="function">
    <text evidence="1">Catalyzes the deamination of dCTP to dUTP.</text>
</comment>
<comment type="catalytic activity">
    <reaction evidence="1">
        <text>dCTP + H2O + H(+) = dUTP + NH4(+)</text>
        <dbReference type="Rhea" id="RHEA:22680"/>
        <dbReference type="ChEBI" id="CHEBI:15377"/>
        <dbReference type="ChEBI" id="CHEBI:15378"/>
        <dbReference type="ChEBI" id="CHEBI:28938"/>
        <dbReference type="ChEBI" id="CHEBI:61481"/>
        <dbReference type="ChEBI" id="CHEBI:61555"/>
        <dbReference type="EC" id="3.5.4.13"/>
    </reaction>
</comment>
<comment type="pathway">
    <text evidence="1">Pyrimidine metabolism; dUMP biosynthesis; dUMP from dCTP (dUTP route): step 1/2.</text>
</comment>
<comment type="subunit">
    <text evidence="1">Homotrimer.</text>
</comment>
<comment type="similarity">
    <text evidence="1">Belongs to the dCTP deaminase family.</text>
</comment>
<keyword id="KW-0378">Hydrolase</keyword>
<keyword id="KW-0546">Nucleotide metabolism</keyword>
<keyword id="KW-0547">Nucleotide-binding</keyword>
<gene>
    <name evidence="1" type="primary">dcd</name>
    <name type="ordered locus">ECIAI39_0948</name>
</gene>
<feature type="chain" id="PRO_1000117970" description="dCTP deaminase">
    <location>
        <begin position="1"/>
        <end position="193"/>
    </location>
</feature>
<feature type="region of interest" description="Disordered" evidence="2">
    <location>
        <begin position="169"/>
        <end position="193"/>
    </location>
</feature>
<feature type="active site" description="Proton donor/acceptor" evidence="1">
    <location>
        <position position="138"/>
    </location>
</feature>
<feature type="binding site" evidence="1">
    <location>
        <begin position="110"/>
        <end position="115"/>
    </location>
    <ligand>
        <name>dCTP</name>
        <dbReference type="ChEBI" id="CHEBI:61481"/>
    </ligand>
</feature>
<feature type="binding site" evidence="1">
    <location>
        <position position="128"/>
    </location>
    <ligand>
        <name>dCTP</name>
        <dbReference type="ChEBI" id="CHEBI:61481"/>
    </ligand>
</feature>
<feature type="binding site" evidence="1">
    <location>
        <begin position="136"/>
        <end position="138"/>
    </location>
    <ligand>
        <name>dCTP</name>
        <dbReference type="ChEBI" id="CHEBI:61481"/>
    </ligand>
</feature>
<feature type="binding site" evidence="1">
    <location>
        <position position="171"/>
    </location>
    <ligand>
        <name>dCTP</name>
        <dbReference type="ChEBI" id="CHEBI:61481"/>
    </ligand>
</feature>
<feature type="binding site" evidence="1">
    <location>
        <position position="178"/>
    </location>
    <ligand>
        <name>dCTP</name>
        <dbReference type="ChEBI" id="CHEBI:61481"/>
    </ligand>
</feature>
<feature type="binding site" evidence="1">
    <location>
        <position position="182"/>
    </location>
    <ligand>
        <name>dCTP</name>
        <dbReference type="ChEBI" id="CHEBI:61481"/>
    </ligand>
</feature>
<name>DCD_ECO7I</name>
<sequence>MRLCDRDIEAWLDEGRLSINPRPPVERINGATVDVRLGNKFRTFRGHTAAFIDLSGPKDEVSAALDRVMSDEIVLDESEAFYLHPGELALAVTLESVTLPADLVGWLDGRSSLARLGLMVHVTAHRIDPGWSGCIVLEFYNSGKLPLALRPGMLIGALSFEPLSGPAARPYNRREDAKYRNQQGAVASRIDKD</sequence>
<dbReference type="EC" id="3.5.4.13" evidence="1"/>
<dbReference type="EMBL" id="CU928164">
    <property type="protein sequence ID" value="CAR17085.1"/>
    <property type="molecule type" value="Genomic_DNA"/>
</dbReference>
<dbReference type="RefSeq" id="WP_001234777.1">
    <property type="nucleotide sequence ID" value="NC_011750.1"/>
</dbReference>
<dbReference type="RefSeq" id="YP_002406970.1">
    <property type="nucleotide sequence ID" value="NC_011750.1"/>
</dbReference>
<dbReference type="SMR" id="B7NQC0"/>
<dbReference type="STRING" id="585057.ECIAI39_0948"/>
<dbReference type="KEGG" id="ect:ECIAI39_0948"/>
<dbReference type="PATRIC" id="fig|585057.6.peg.999"/>
<dbReference type="HOGENOM" id="CLU_087476_2_0_6"/>
<dbReference type="UniPathway" id="UPA00610">
    <property type="reaction ID" value="UER00665"/>
</dbReference>
<dbReference type="Proteomes" id="UP000000749">
    <property type="component" value="Chromosome"/>
</dbReference>
<dbReference type="GO" id="GO:0008829">
    <property type="term" value="F:dCTP deaminase activity"/>
    <property type="evidence" value="ECO:0007669"/>
    <property type="project" value="UniProtKB-UniRule"/>
</dbReference>
<dbReference type="GO" id="GO:0000166">
    <property type="term" value="F:nucleotide binding"/>
    <property type="evidence" value="ECO:0007669"/>
    <property type="project" value="UniProtKB-KW"/>
</dbReference>
<dbReference type="GO" id="GO:0006226">
    <property type="term" value="P:dUMP biosynthetic process"/>
    <property type="evidence" value="ECO:0007669"/>
    <property type="project" value="UniProtKB-UniPathway"/>
</dbReference>
<dbReference type="GO" id="GO:0006229">
    <property type="term" value="P:dUTP biosynthetic process"/>
    <property type="evidence" value="ECO:0007669"/>
    <property type="project" value="UniProtKB-UniRule"/>
</dbReference>
<dbReference type="GO" id="GO:0015949">
    <property type="term" value="P:nucleobase-containing small molecule interconversion"/>
    <property type="evidence" value="ECO:0007669"/>
    <property type="project" value="TreeGrafter"/>
</dbReference>
<dbReference type="CDD" id="cd07557">
    <property type="entry name" value="trimeric_dUTPase"/>
    <property type="match status" value="1"/>
</dbReference>
<dbReference type="FunFam" id="2.70.40.10:FF:000003">
    <property type="entry name" value="dCTP deaminase"/>
    <property type="match status" value="1"/>
</dbReference>
<dbReference type="Gene3D" id="2.70.40.10">
    <property type="match status" value="1"/>
</dbReference>
<dbReference type="HAMAP" id="MF_00146">
    <property type="entry name" value="dCTP_deaminase"/>
    <property type="match status" value="1"/>
</dbReference>
<dbReference type="InterPro" id="IPR011962">
    <property type="entry name" value="dCTP_deaminase"/>
</dbReference>
<dbReference type="InterPro" id="IPR036157">
    <property type="entry name" value="dUTPase-like_sf"/>
</dbReference>
<dbReference type="InterPro" id="IPR033704">
    <property type="entry name" value="dUTPase_trimeric"/>
</dbReference>
<dbReference type="NCBIfam" id="TIGR02274">
    <property type="entry name" value="dCTP_deam"/>
    <property type="match status" value="1"/>
</dbReference>
<dbReference type="PANTHER" id="PTHR42680">
    <property type="entry name" value="DCTP DEAMINASE"/>
    <property type="match status" value="1"/>
</dbReference>
<dbReference type="PANTHER" id="PTHR42680:SF3">
    <property type="entry name" value="DCTP DEAMINASE"/>
    <property type="match status" value="1"/>
</dbReference>
<dbReference type="Pfam" id="PF22769">
    <property type="entry name" value="DCD"/>
    <property type="match status" value="1"/>
</dbReference>
<dbReference type="SUPFAM" id="SSF51283">
    <property type="entry name" value="dUTPase-like"/>
    <property type="match status" value="1"/>
</dbReference>